<sequence>FFGWLIKGAIHAGKAIHGLIHRRRH</sequence>
<protein>
    <recommendedName>
        <fullName>Chrysophsin-1</fullName>
    </recommendedName>
</protein>
<organism evidence="3">
    <name type="scientific">Pagrus major</name>
    <name type="common">Red sea bream</name>
    <name type="synonym">Chrysophrys major</name>
    <dbReference type="NCBI Taxonomy" id="143350"/>
    <lineage>
        <taxon>Eukaryota</taxon>
        <taxon>Metazoa</taxon>
        <taxon>Chordata</taxon>
        <taxon>Craniata</taxon>
        <taxon>Vertebrata</taxon>
        <taxon>Euteleostomi</taxon>
        <taxon>Actinopterygii</taxon>
        <taxon>Neopterygii</taxon>
        <taxon>Teleostei</taxon>
        <taxon>Neoteleostei</taxon>
        <taxon>Acanthomorphata</taxon>
        <taxon>Eupercaria</taxon>
        <taxon>Spariformes</taxon>
        <taxon>Sparidae</taxon>
        <taxon>Pagrus</taxon>
    </lineage>
</organism>
<accession>P83545</accession>
<proteinExistence type="evidence at protein level"/>
<comment type="function">
    <text evidence="1 2">Has antibacterial activity against Gram-positive bacteria B.subtilis ATCC 6633, L.garvieae ATCC 49156 and S.iniae F-8502, and Gram-negative bacteria E.coli WT-2, V.anguillarum ATCC 19264, V.penaeicida KHA, V.harveyi ATCC 14126, V.vulnificus ATCC 33148, A.salmonicida NCMB 1102 and P.putida ATCC 12633. Has hemolytic activity against human red blood cells. Seems to disrupt the membranes by adopting an alpha helical conformation. May play a significant role in innate host defense.</text>
</comment>
<comment type="subcellular location">
    <subcellularLocation>
        <location>Secreted</location>
    </subcellularLocation>
</comment>
<comment type="tissue specificity">
    <text evidence="1">Gill. Localized in certain epithelial cells lining the surface of secondary lamellae and eosinophilic granule cell-like cells at the base of secondary lamellae.</text>
</comment>
<comment type="mass spectrometry"/>
<comment type="similarity">
    <text evidence="3">Belongs to the pleurocidin family.</text>
</comment>
<reference evidence="3" key="1">
    <citation type="journal article" date="2003" name="Eur. J. Biochem.">
        <title>Purification and characterization of three isoforms of chrysophsin, a novel antimicrobial peptide in the gills of the red sea bream, Chrysophrys major.</title>
        <authorList>
            <person name="Iijima N."/>
            <person name="Tanimoto N."/>
            <person name="Emoto Y."/>
            <person name="Morita Y."/>
            <person name="Uematsu K."/>
            <person name="Murakami T."/>
            <person name="Nakai T."/>
        </authorList>
    </citation>
    <scope>PROTEIN SEQUENCE</scope>
    <scope>FUNCTION</scope>
    <scope>TISSUE SPECIFICITY</scope>
    <scope>AMIDATION AT HIS-25</scope>
    <scope>MASS SPECTROMETRY</scope>
    <scope>CIRCULAR DICHROISM ANALYSIS</scope>
    <scope>SYNTHESIS</scope>
    <source>
        <tissue>Gill</tissue>
    </source>
</reference>
<feature type="peptide" id="PRO_0000043414" description="Chrysophsin-1">
    <location>
        <begin position="1"/>
        <end position="25"/>
    </location>
</feature>
<feature type="modified residue" description="Histidine amide" evidence="1">
    <location>
        <position position="25"/>
    </location>
</feature>
<keyword id="KW-0027">Amidation</keyword>
<keyword id="KW-0044">Antibiotic</keyword>
<keyword id="KW-0929">Antimicrobial</keyword>
<keyword id="KW-0204">Cytolysis</keyword>
<keyword id="KW-0903">Direct protein sequencing</keyword>
<keyword id="KW-0354">Hemolysis</keyword>
<keyword id="KW-0964">Secreted</keyword>
<name>CHY1_PAGMA</name>
<evidence type="ECO:0000269" key="1">
    <source>
    </source>
</evidence>
<evidence type="ECO:0000303" key="2">
    <source>
    </source>
</evidence>
<evidence type="ECO:0000305" key="3"/>
<dbReference type="TCDB" id="1.C.88.1.1">
    <property type="family name" value="the chrysophsin (chrysophsin) family"/>
</dbReference>
<dbReference type="GO" id="GO:0005576">
    <property type="term" value="C:extracellular region"/>
    <property type="evidence" value="ECO:0007669"/>
    <property type="project" value="UniProtKB-SubCell"/>
</dbReference>
<dbReference type="GO" id="GO:0006952">
    <property type="term" value="P:defense response"/>
    <property type="evidence" value="ECO:0000314"/>
    <property type="project" value="UniProtKB"/>
</dbReference>
<dbReference type="GO" id="GO:0050829">
    <property type="term" value="P:defense response to Gram-negative bacterium"/>
    <property type="evidence" value="ECO:0000314"/>
    <property type="project" value="UniProtKB"/>
</dbReference>
<dbReference type="GO" id="GO:0050830">
    <property type="term" value="P:defense response to Gram-positive bacterium"/>
    <property type="evidence" value="ECO:0000314"/>
    <property type="project" value="UniProtKB"/>
</dbReference>
<dbReference type="GO" id="GO:0044179">
    <property type="term" value="P:hemolysis in another organism"/>
    <property type="evidence" value="ECO:0000314"/>
    <property type="project" value="UniProtKB"/>
</dbReference>
<dbReference type="InterPro" id="IPR012515">
    <property type="entry name" value="Antimicrobial12"/>
</dbReference>
<dbReference type="Pfam" id="PF08107">
    <property type="entry name" value="Antimicrobial12"/>
    <property type="match status" value="1"/>
</dbReference>